<proteinExistence type="evidence at protein level"/>
<organism>
    <name type="scientific">Caenorhabditis elegans</name>
    <dbReference type="NCBI Taxonomy" id="6239"/>
    <lineage>
        <taxon>Eukaryota</taxon>
        <taxon>Metazoa</taxon>
        <taxon>Ecdysozoa</taxon>
        <taxon>Nematoda</taxon>
        <taxon>Chromadorea</taxon>
        <taxon>Rhabditida</taxon>
        <taxon>Rhabditina</taxon>
        <taxon>Rhabditomorpha</taxon>
        <taxon>Rhabditoidea</taxon>
        <taxon>Rhabditidae</taxon>
        <taxon>Peloderinae</taxon>
        <taxon>Caenorhabditis</taxon>
    </lineage>
</organism>
<keyword id="KW-0349">Heme</keyword>
<keyword id="KW-0376">Hydrogen peroxide</keyword>
<keyword id="KW-0408">Iron</keyword>
<keyword id="KW-0479">Metal-binding</keyword>
<keyword id="KW-0560">Oxidoreductase</keyword>
<keyword id="KW-0575">Peroxidase</keyword>
<keyword id="KW-1185">Reference proteome</keyword>
<sequence length="497" mass="57305">MPNDPSDNQLKTYKETYPKPQVITTSNGAPIYSKTAVLTAGRRGPMLMQDVVYMDEMAHFDRERIPERVVHAKGAGAHGYFEVTHDITKYCKADMFNKVGKQTPLLVRFSTVAGESGSADTVRDPRGFSLKFYTEEGNWDLVGNNTPIFFIRDAIHFPNFIHALKRNPQTHMRDPNALFDFWMNRPESIHQVMFLYSDRGIPDGFRFMNGYGAHTFKMVNKEGNPIYCKFHFKPAQGSKNLDPTDAGKLASSDPDYAIRDLFNAIESRNFPEWKMFIQVMTFEQAEKWEFNPFDVTKVWPHGDYPLIEVGKMVLNRNVKNYFAEVEQAAFCPAHIVPGIEFSPDKMLQGRIFSYTDTHYHRLGPNYIQLPVNCPYRSRAHTTQRDGAMAYESQGDAPNYFPNSFRGYRTRDDVKESTFQTTGDVDRYETGDDHNYEQPRQFWEKVLKEEERDRLVGNLASDLGGCLEEIQNGMVKEFTKVHPDFGNALRHQLCQKKH</sequence>
<gene>
    <name evidence="10" type="primary">ctl-1</name>
    <name evidence="10" type="synonym">cat-2</name>
    <name evidence="10" type="ORF">Y54G11A.6</name>
</gene>
<accession>O61235</accession>
<accession>O18193</accession>
<accession>Q9XVZ4</accession>
<comment type="function">
    <text evidence="3 4 5 9">Catalase involved in the oxidative stress response serving to protect cells from toxicity (Probable) (PubMed:25243607, PubMed:28456303). For instance plays a role in defending against oxidative damage induced by excessive copper stress (PubMed:25243607). Not required for maintaining normal lifespan (PubMed:14996832).</text>
</comment>
<comment type="catalytic activity">
    <reaction evidence="2 3">
        <text>2 H2O2 = O2 + 2 H2O</text>
        <dbReference type="Rhea" id="RHEA:20309"/>
        <dbReference type="ChEBI" id="CHEBI:15377"/>
        <dbReference type="ChEBI" id="CHEBI:15379"/>
        <dbReference type="ChEBI" id="CHEBI:16240"/>
        <dbReference type="EC" id="1.11.1.6"/>
    </reaction>
</comment>
<comment type="cofactor">
    <cofactor>
        <name>heme</name>
        <dbReference type="ChEBI" id="CHEBI:30413"/>
    </cofactor>
</comment>
<comment type="induction">
    <text evidence="4 5">Up-regulated in response to Cu(2+) (PubMed:25243607). Up-regulated in response to phoxim (an organophosphorus insecticide) and carbaryl (a carbamate insecticide) (PubMed:28456303).</text>
</comment>
<comment type="disruption phenotype">
    <text evidence="3">No defects in lifespan or egg laying capacity (PubMed:14996832). Abolishes ctl-1 enzymatic activity and reduces the global levels of catalase activity to 75% of the total catalase activity observed in wild-type animals (PubMed:14996832).</text>
</comment>
<comment type="similarity">
    <text evidence="6">Belongs to the catalase family.</text>
</comment>
<comment type="caution">
    <text evidence="7 8">Was originally reported to play a role in determining adult lifespan. However, the paper was later retracted due to errors in the data.</text>
</comment>
<comment type="sequence caution" evidence="6">
    <conflict type="miscellaneous discrepancy">
        <sequence resource="EMBL-CDS" id="AAC14537"/>
    </conflict>
</comment>
<feature type="chain" id="PRO_0000084910" description="Catalase-2">
    <location>
        <begin position="1"/>
        <end position="497"/>
    </location>
</feature>
<feature type="active site" evidence="2">
    <location>
        <position position="71"/>
    </location>
</feature>
<feature type="active site" evidence="2">
    <location>
        <position position="144"/>
    </location>
</feature>
<feature type="binding site" description="axial binding residue" evidence="1">
    <location>
        <position position="354"/>
    </location>
    <ligand>
        <name>heme</name>
        <dbReference type="ChEBI" id="CHEBI:30413"/>
    </ligand>
    <ligandPart>
        <name>Fe</name>
        <dbReference type="ChEBI" id="CHEBI:18248"/>
    </ligandPart>
</feature>
<feature type="sequence conflict" description="In Ref. 1; CAA74394/CAA74392." evidence="6" ref="1">
    <original>DG</original>
    <variation>EV</variation>
    <location>
        <begin position="385"/>
        <end position="386"/>
    </location>
</feature>
<feature type="sequence conflict" description="In Ref. 1; CAA74394/CAA74392." evidence="6" ref="1">
    <original>GD</original>
    <variation>EN</variation>
    <location>
        <begin position="394"/>
        <end position="395"/>
    </location>
</feature>
<feature type="sequence conflict" description="In Ref. 1; CAA74394/CAA74392." evidence="6" ref="1">
    <original>Y</original>
    <variation>S</variation>
    <location>
        <position position="399"/>
    </location>
</feature>
<name>CATA2_CAEEL</name>
<protein>
    <recommendedName>
        <fullName>Catalase-2</fullName>
        <ecNumber evidence="3">1.11.1.6</ecNumber>
    </recommendedName>
</protein>
<evidence type="ECO:0000250" key="1"/>
<evidence type="ECO:0000255" key="2">
    <source>
        <dbReference type="PROSITE-ProRule" id="PRU10013"/>
    </source>
</evidence>
<evidence type="ECO:0000269" key="3">
    <source>
    </source>
</evidence>
<evidence type="ECO:0000269" key="4">
    <source>
    </source>
</evidence>
<evidence type="ECO:0000269" key="5">
    <source>
    </source>
</evidence>
<evidence type="ECO:0000305" key="6"/>
<evidence type="ECO:0000305" key="7">
    <source>
    </source>
</evidence>
<evidence type="ECO:0000305" key="8">
    <source>
    </source>
</evidence>
<evidence type="ECO:0000305" key="9">
    <source>
    </source>
</evidence>
<evidence type="ECO:0000312" key="10">
    <source>
        <dbReference type="WormBase" id="Y54G11A.6"/>
    </source>
</evidence>
<dbReference type="EC" id="1.11.1.6" evidence="3"/>
<dbReference type="EMBL" id="U55384">
    <property type="protein sequence ID" value="AAC14537.1"/>
    <property type="status" value="ALT_SEQ"/>
    <property type="molecule type" value="mRNA"/>
</dbReference>
<dbReference type="EMBL" id="Y14066">
    <property type="protein sequence ID" value="CAA74394.1"/>
    <property type="molecule type" value="mRNA"/>
</dbReference>
<dbReference type="EMBL" id="Y14065">
    <property type="protein sequence ID" value="CAA74392.1"/>
    <property type="molecule type" value="Genomic_DNA"/>
</dbReference>
<dbReference type="EMBL" id="BX284602">
    <property type="protein sequence ID" value="CAA22458.2"/>
    <property type="molecule type" value="Genomic_DNA"/>
</dbReference>
<dbReference type="PIR" id="T37477">
    <property type="entry name" value="T37477"/>
</dbReference>
<dbReference type="PIR" id="T42443">
    <property type="entry name" value="T42443"/>
</dbReference>
<dbReference type="RefSeq" id="NP_496979.2">
    <property type="nucleotide sequence ID" value="NM_064578.4"/>
</dbReference>
<dbReference type="SMR" id="O61235"/>
<dbReference type="BioGRID" id="56780">
    <property type="interactions" value="6"/>
</dbReference>
<dbReference type="FunCoup" id="O61235">
    <property type="interactions" value="1097"/>
</dbReference>
<dbReference type="STRING" id="6239.Y54G11A.6.2"/>
<dbReference type="PeroxiBase" id="8429">
    <property type="entry name" value="CelKat01"/>
</dbReference>
<dbReference type="PaxDb" id="6239-Y54G11A.6"/>
<dbReference type="PeptideAtlas" id="O61235"/>
<dbReference type="EnsemblMetazoa" id="Y54G11A.6.1">
    <property type="protein sequence ID" value="Y54G11A.6.1"/>
    <property type="gene ID" value="WBGene00000830"/>
</dbReference>
<dbReference type="GeneID" id="259738"/>
<dbReference type="KEGG" id="cel:CELE_Y54G11A.6"/>
<dbReference type="UCSC" id="B0432.5a">
    <property type="organism name" value="c. elegans"/>
</dbReference>
<dbReference type="AGR" id="WB:WBGene00000830"/>
<dbReference type="CTD" id="259738"/>
<dbReference type="WormBase" id="Y54G11A.6">
    <property type="protein sequence ID" value="CE30713"/>
    <property type="gene ID" value="WBGene00000830"/>
    <property type="gene designation" value="ctl-1"/>
</dbReference>
<dbReference type="eggNOG" id="KOG0047">
    <property type="taxonomic scope" value="Eukaryota"/>
</dbReference>
<dbReference type="GeneTree" id="ENSGT00390000018100"/>
<dbReference type="HOGENOM" id="CLU_010645_2_0_1"/>
<dbReference type="InParanoid" id="O61235"/>
<dbReference type="OMA" id="QERMVWH"/>
<dbReference type="OrthoDB" id="6880011at2759"/>
<dbReference type="PhylomeDB" id="O61235"/>
<dbReference type="PRO" id="PR:O61235"/>
<dbReference type="Proteomes" id="UP000001940">
    <property type="component" value="Chromosome II"/>
</dbReference>
<dbReference type="Bgee" id="WBGene00000830">
    <property type="expression patterns" value="Expressed in larva and 3 other cell types or tissues"/>
</dbReference>
<dbReference type="GO" id="GO:0005737">
    <property type="term" value="C:cytoplasm"/>
    <property type="evidence" value="ECO:0000318"/>
    <property type="project" value="GO_Central"/>
</dbReference>
<dbReference type="GO" id="GO:0005739">
    <property type="term" value="C:mitochondrion"/>
    <property type="evidence" value="ECO:0000318"/>
    <property type="project" value="GO_Central"/>
</dbReference>
<dbReference type="GO" id="GO:0005777">
    <property type="term" value="C:peroxisome"/>
    <property type="evidence" value="ECO:0000318"/>
    <property type="project" value="GO_Central"/>
</dbReference>
<dbReference type="GO" id="GO:0004096">
    <property type="term" value="F:catalase activity"/>
    <property type="evidence" value="ECO:0000315"/>
    <property type="project" value="WormBase"/>
</dbReference>
<dbReference type="GO" id="GO:0020037">
    <property type="term" value="F:heme binding"/>
    <property type="evidence" value="ECO:0000318"/>
    <property type="project" value="GO_Central"/>
</dbReference>
<dbReference type="GO" id="GO:0046872">
    <property type="term" value="F:metal ion binding"/>
    <property type="evidence" value="ECO:0007669"/>
    <property type="project" value="UniProtKB-KW"/>
</dbReference>
<dbReference type="GO" id="GO:0042744">
    <property type="term" value="P:hydrogen peroxide catabolic process"/>
    <property type="evidence" value="ECO:0000318"/>
    <property type="project" value="GO_Central"/>
</dbReference>
<dbReference type="GO" id="GO:0042542">
    <property type="term" value="P:response to hydrogen peroxide"/>
    <property type="evidence" value="ECO:0000318"/>
    <property type="project" value="GO_Central"/>
</dbReference>
<dbReference type="CDD" id="cd08156">
    <property type="entry name" value="catalase_clade_3"/>
    <property type="match status" value="1"/>
</dbReference>
<dbReference type="FunFam" id="2.40.180.10:FF:000001">
    <property type="entry name" value="Catalase"/>
    <property type="match status" value="1"/>
</dbReference>
<dbReference type="Gene3D" id="2.40.180.10">
    <property type="entry name" value="Catalase core domain"/>
    <property type="match status" value="1"/>
</dbReference>
<dbReference type="InterPro" id="IPR018028">
    <property type="entry name" value="Catalase"/>
</dbReference>
<dbReference type="InterPro" id="IPR040333">
    <property type="entry name" value="Catalase_3"/>
</dbReference>
<dbReference type="InterPro" id="IPR024708">
    <property type="entry name" value="Catalase_AS"/>
</dbReference>
<dbReference type="InterPro" id="IPR024711">
    <property type="entry name" value="Catalase_clade1/3"/>
</dbReference>
<dbReference type="InterPro" id="IPR011614">
    <property type="entry name" value="Catalase_core"/>
</dbReference>
<dbReference type="InterPro" id="IPR002226">
    <property type="entry name" value="Catalase_haem_BS"/>
</dbReference>
<dbReference type="InterPro" id="IPR010582">
    <property type="entry name" value="Catalase_immune_responsive"/>
</dbReference>
<dbReference type="InterPro" id="IPR020835">
    <property type="entry name" value="Catalase_sf"/>
</dbReference>
<dbReference type="PANTHER" id="PTHR11465">
    <property type="entry name" value="CATALASE"/>
    <property type="match status" value="1"/>
</dbReference>
<dbReference type="PANTHER" id="PTHR11465:SF9">
    <property type="entry name" value="CATALASE"/>
    <property type="match status" value="1"/>
</dbReference>
<dbReference type="Pfam" id="PF00199">
    <property type="entry name" value="Catalase"/>
    <property type="match status" value="1"/>
</dbReference>
<dbReference type="Pfam" id="PF06628">
    <property type="entry name" value="Catalase-rel"/>
    <property type="match status" value="1"/>
</dbReference>
<dbReference type="PIRSF" id="PIRSF038928">
    <property type="entry name" value="Catalase_clade1-3"/>
    <property type="match status" value="1"/>
</dbReference>
<dbReference type="PRINTS" id="PR00067">
    <property type="entry name" value="CATALASE"/>
</dbReference>
<dbReference type="SMART" id="SM01060">
    <property type="entry name" value="Catalase"/>
    <property type="match status" value="1"/>
</dbReference>
<dbReference type="SUPFAM" id="SSF56634">
    <property type="entry name" value="Heme-dependent catalase-like"/>
    <property type="match status" value="1"/>
</dbReference>
<dbReference type="PROSITE" id="PS00437">
    <property type="entry name" value="CATALASE_1"/>
    <property type="match status" value="1"/>
</dbReference>
<dbReference type="PROSITE" id="PS00438">
    <property type="entry name" value="CATALASE_2"/>
    <property type="match status" value="1"/>
</dbReference>
<dbReference type="PROSITE" id="PS51402">
    <property type="entry name" value="CATALASE_3"/>
    <property type="match status" value="1"/>
</dbReference>
<reference key="1">
    <citation type="submission" date="1997-06" db="EMBL/GenBank/DDBJ databases">
        <authorList>
            <person name="Eckelt V.H.O."/>
        </authorList>
    </citation>
    <scope>NUCLEOTIDE SEQUENCE [GENOMIC DNA / MRNA]</scope>
    <source>
        <strain>Bristol N2</strain>
    </source>
</reference>
<reference key="2">
    <citation type="journal article" date="1998" name="Science">
        <title>Genome sequence of the nematode C. elegans: a platform for investigating biology.</title>
        <authorList>
            <consortium name="The C. elegans sequencing consortium"/>
        </authorList>
    </citation>
    <scope>NUCLEOTIDE SEQUENCE [LARGE SCALE GENOMIC DNA]</scope>
    <source>
        <strain>Bristol N2</strain>
    </source>
</reference>
<reference key="3">
    <citation type="journal article" date="1999" name="Nature">
        <title>A cytosolic catalase is needed to extend adult lifespan in C. elegans daf-C and clk-1 mutants.</title>
        <authorList>
            <person name="Taub J."/>
            <person name="Lau J.F."/>
            <person name="Ma C."/>
            <person name="Hahn J.H."/>
            <person name="Hoque R."/>
            <person name="Rothblatt J."/>
            <person name="Chalfie M."/>
        </authorList>
    </citation>
    <scope>RETRACTED PAPER</scope>
    <source>
        <strain>Bristol N2</strain>
    </source>
</reference>
<reference key="4">
    <citation type="journal article" date="2003" name="Nature">
        <authorList>
            <person name="Taub J."/>
            <person name="Lau J.F."/>
            <person name="Ma C."/>
            <person name="Hahn J.H."/>
            <person name="Hoque R."/>
            <person name="Rothblatt J."/>
            <person name="Chalfie M."/>
        </authorList>
    </citation>
    <scope>RETRACTION NOTICE OF PUBMED:10335847</scope>
</reference>
<reference key="5">
    <citation type="journal article" date="2004" name="J. Biol. Chem.">
        <title>Lack of peroxisomal catalase causes a progeric phenotype in Caenorhabditis elegans.</title>
        <authorList>
            <person name="Petriv O.I."/>
            <person name="Rachubinski R.A."/>
        </authorList>
    </citation>
    <scope>FUNCTION</scope>
    <scope>CATALYTIC ACTIVITY</scope>
    <scope>DISRUPTION PHENOTYPE</scope>
</reference>
<reference key="6">
    <citation type="journal article" date="2007" name="Proc. Natl. Acad. Sci. U.S.A.">
        <title>Metabotyping of Caenorhabditis elegans reveals latent phenotypes.</title>
        <authorList>
            <person name="Blaise B.J."/>
            <person name="Giacomotto J."/>
            <person name="Elena B."/>
            <person name="Dumas M.E."/>
            <person name="Toulhoat P."/>
            <person name="Segalat L."/>
            <person name="Emsley L."/>
        </authorList>
    </citation>
    <scope>FUNCTION</scope>
</reference>
<reference key="7">
    <citation type="journal article" date="2014" name="PLoS ONE">
        <title>Molecular basis for antioxidant enzymes in mediating copper detoxification in the nematode Caenorhabditis elegans.</title>
        <authorList>
            <person name="Song S."/>
            <person name="Zhang X."/>
            <person name="Wu H."/>
            <person name="Han Y."/>
            <person name="Zhang J."/>
            <person name="Ma E."/>
            <person name="Guo Y."/>
        </authorList>
    </citation>
    <scope>FUNCTION</scope>
    <scope>INDUCTION BY COPPER</scope>
</reference>
<reference key="8">
    <citation type="journal article" date="2017" name="Pestic. Biochem. Physiol.">
        <title>Antioxidant enzymes and their role in phoxim and carbaryl stress in Caenorhabditis elegans.</title>
        <authorList>
            <person name="Han Y."/>
            <person name="Song S."/>
            <person name="Wu H."/>
            <person name="Zhang J."/>
            <person name="Ma E."/>
        </authorList>
    </citation>
    <scope>FUNCTION</scope>
    <scope>INDUCTION BY PESTICIDES</scope>
</reference>